<evidence type="ECO:0000255" key="1">
    <source>
        <dbReference type="HAMAP-Rule" id="MF_00017"/>
    </source>
</evidence>
<name>RECR_PROM3</name>
<protein>
    <recommendedName>
        <fullName evidence="1">Recombination protein RecR</fullName>
    </recommendedName>
</protein>
<feature type="chain" id="PRO_0000322932" description="Recombination protein RecR">
    <location>
        <begin position="1"/>
        <end position="189"/>
    </location>
</feature>
<feature type="domain" description="Toprim" evidence="1">
    <location>
        <begin position="71"/>
        <end position="165"/>
    </location>
</feature>
<feature type="zinc finger region" description="C4-type" evidence="1">
    <location>
        <begin position="48"/>
        <end position="63"/>
    </location>
</feature>
<reference key="1">
    <citation type="journal article" date="2007" name="PLoS Genet.">
        <title>Patterns and implications of gene gain and loss in the evolution of Prochlorococcus.</title>
        <authorList>
            <person name="Kettler G.C."/>
            <person name="Martiny A.C."/>
            <person name="Huang K."/>
            <person name="Zucker J."/>
            <person name="Coleman M.L."/>
            <person name="Rodrigue S."/>
            <person name="Chen F."/>
            <person name="Lapidus A."/>
            <person name="Ferriera S."/>
            <person name="Johnson J."/>
            <person name="Steglich C."/>
            <person name="Church G.M."/>
            <person name="Richardson P."/>
            <person name="Chisholm S.W."/>
        </authorList>
    </citation>
    <scope>NUCLEOTIDE SEQUENCE [LARGE SCALE GENOMIC DNA]</scope>
    <source>
        <strain>MIT 9303</strain>
    </source>
</reference>
<dbReference type="EMBL" id="CP000554">
    <property type="protein sequence ID" value="ABM77722.1"/>
    <property type="molecule type" value="Genomic_DNA"/>
</dbReference>
<dbReference type="SMR" id="A2C8B2"/>
<dbReference type="STRING" id="59922.P9303_09731"/>
<dbReference type="KEGG" id="pmf:P9303_09731"/>
<dbReference type="HOGENOM" id="CLU_060739_1_0_3"/>
<dbReference type="Proteomes" id="UP000002274">
    <property type="component" value="Chromosome"/>
</dbReference>
<dbReference type="GO" id="GO:0003677">
    <property type="term" value="F:DNA binding"/>
    <property type="evidence" value="ECO:0007669"/>
    <property type="project" value="UniProtKB-UniRule"/>
</dbReference>
<dbReference type="GO" id="GO:0008270">
    <property type="term" value="F:zinc ion binding"/>
    <property type="evidence" value="ECO:0007669"/>
    <property type="project" value="UniProtKB-KW"/>
</dbReference>
<dbReference type="GO" id="GO:0006310">
    <property type="term" value="P:DNA recombination"/>
    <property type="evidence" value="ECO:0007669"/>
    <property type="project" value="UniProtKB-UniRule"/>
</dbReference>
<dbReference type="GO" id="GO:0006281">
    <property type="term" value="P:DNA repair"/>
    <property type="evidence" value="ECO:0007669"/>
    <property type="project" value="UniProtKB-UniRule"/>
</dbReference>
<dbReference type="CDD" id="cd01025">
    <property type="entry name" value="TOPRIM_recR"/>
    <property type="match status" value="1"/>
</dbReference>
<dbReference type="Gene3D" id="3.40.1360.10">
    <property type="match status" value="1"/>
</dbReference>
<dbReference type="Gene3D" id="6.10.250.240">
    <property type="match status" value="1"/>
</dbReference>
<dbReference type="Gene3D" id="1.10.8.420">
    <property type="entry name" value="RecR Domain 1"/>
    <property type="match status" value="1"/>
</dbReference>
<dbReference type="HAMAP" id="MF_00017">
    <property type="entry name" value="RecR"/>
    <property type="match status" value="1"/>
</dbReference>
<dbReference type="InterPro" id="IPR000093">
    <property type="entry name" value="DNA_Rcmb_RecR"/>
</dbReference>
<dbReference type="InterPro" id="IPR023627">
    <property type="entry name" value="Rcmb_RecR"/>
</dbReference>
<dbReference type="InterPro" id="IPR015967">
    <property type="entry name" value="Rcmb_RecR_Znf"/>
</dbReference>
<dbReference type="InterPro" id="IPR006171">
    <property type="entry name" value="TOPRIM_dom"/>
</dbReference>
<dbReference type="InterPro" id="IPR034137">
    <property type="entry name" value="TOPRIM_RecR"/>
</dbReference>
<dbReference type="NCBIfam" id="TIGR00615">
    <property type="entry name" value="recR"/>
    <property type="match status" value="1"/>
</dbReference>
<dbReference type="PANTHER" id="PTHR30446">
    <property type="entry name" value="RECOMBINATION PROTEIN RECR"/>
    <property type="match status" value="1"/>
</dbReference>
<dbReference type="PANTHER" id="PTHR30446:SF0">
    <property type="entry name" value="RECOMBINATION PROTEIN RECR"/>
    <property type="match status" value="1"/>
</dbReference>
<dbReference type="Pfam" id="PF21175">
    <property type="entry name" value="RecR_C"/>
    <property type="match status" value="1"/>
</dbReference>
<dbReference type="Pfam" id="PF21176">
    <property type="entry name" value="RecR_HhH"/>
    <property type="match status" value="1"/>
</dbReference>
<dbReference type="Pfam" id="PF02132">
    <property type="entry name" value="RecR_ZnF"/>
    <property type="match status" value="1"/>
</dbReference>
<dbReference type="Pfam" id="PF13662">
    <property type="entry name" value="Toprim_4"/>
    <property type="match status" value="1"/>
</dbReference>
<dbReference type="SMART" id="SM00493">
    <property type="entry name" value="TOPRIM"/>
    <property type="match status" value="1"/>
</dbReference>
<dbReference type="SUPFAM" id="SSF111304">
    <property type="entry name" value="Recombination protein RecR"/>
    <property type="match status" value="1"/>
</dbReference>
<dbReference type="PROSITE" id="PS50880">
    <property type="entry name" value="TOPRIM"/>
    <property type="match status" value="1"/>
</dbReference>
<sequence length="189" mass="20978">MIDQFERLPGIGPRTAQRLALHLLRQPEDQIRAFAEALLAARSQVGQCQTCFHLSAEPLCDICRDGTRCDQLLCVVADSRDLLALERTREYKGRYHVLGGLISPMDGIGPDMLQIPSLIQRVDRDGISEVILALTPSVEGDTTSLYLARLLKPFTQVSRIAYGLPVGSELEYADEVTLTRALEGRRAMQ</sequence>
<accession>A2C8B2</accession>
<proteinExistence type="inferred from homology"/>
<organism>
    <name type="scientific">Prochlorococcus marinus (strain MIT 9303)</name>
    <dbReference type="NCBI Taxonomy" id="59922"/>
    <lineage>
        <taxon>Bacteria</taxon>
        <taxon>Bacillati</taxon>
        <taxon>Cyanobacteriota</taxon>
        <taxon>Cyanophyceae</taxon>
        <taxon>Synechococcales</taxon>
        <taxon>Prochlorococcaceae</taxon>
        <taxon>Prochlorococcus</taxon>
    </lineage>
</organism>
<gene>
    <name evidence="1" type="primary">recR</name>
    <name type="ordered locus">P9303_09731</name>
</gene>
<keyword id="KW-0227">DNA damage</keyword>
<keyword id="KW-0233">DNA recombination</keyword>
<keyword id="KW-0234">DNA repair</keyword>
<keyword id="KW-0479">Metal-binding</keyword>
<keyword id="KW-0862">Zinc</keyword>
<keyword id="KW-0863">Zinc-finger</keyword>
<comment type="function">
    <text evidence="1">May play a role in DNA repair. It seems to be involved in an RecBC-independent recombinational process of DNA repair. It may act with RecF and RecO.</text>
</comment>
<comment type="similarity">
    <text evidence="1">Belongs to the RecR family.</text>
</comment>